<reference key="1">
    <citation type="journal article" date="1998" name="Gene">
        <title>Molecular characterization of two genes encoding betaine aldehyde dehydrogenase from amaranth. Expression in leaves under short-term exposure to osmotic stress or abscisic acid.</title>
        <authorList>
            <person name="Legaria J."/>
            <person name="Rajsbaum R."/>
            <person name="Munoz-Clares R.A."/>
            <person name="Villegas-Sepulveda N."/>
            <person name="Simpson J."/>
            <person name="Iturriaga G."/>
        </authorList>
    </citation>
    <scope>NUCLEOTIDE SEQUENCE [GENOMIC DNA]</scope>
    <source>
        <tissue>Leaf</tissue>
    </source>
</reference>
<proteinExistence type="inferred from homology"/>
<feature type="transit peptide" description="Chloroplast" evidence="2">
    <location>
        <begin position="1"/>
        <end position="7"/>
    </location>
</feature>
<feature type="chain" id="PRO_0000007178" description="Betaine aldehyde dehydrogenase, chloroplastic">
    <location>
        <begin position="8"/>
        <end position="501"/>
    </location>
</feature>
<feature type="active site" description="Proton acceptor" evidence="3 4">
    <location>
        <position position="260"/>
    </location>
</feature>
<feature type="active site" description="Nucleophile" evidence="3 4">
    <location>
        <position position="294"/>
    </location>
</feature>
<feature type="binding site" evidence="1">
    <location>
        <begin position="238"/>
        <end position="243"/>
    </location>
    <ligand>
        <name>NAD(+)</name>
        <dbReference type="ChEBI" id="CHEBI:57540"/>
    </ligand>
</feature>
<feature type="site" description="Transition state stabilizer" evidence="1">
    <location>
        <position position="162"/>
    </location>
</feature>
<evidence type="ECO:0000250" key="1"/>
<evidence type="ECO:0000255" key="2"/>
<evidence type="ECO:0000255" key="3">
    <source>
        <dbReference type="PROSITE-ProRule" id="PRU10007"/>
    </source>
</evidence>
<evidence type="ECO:0000255" key="4">
    <source>
        <dbReference type="PROSITE-ProRule" id="PRU10008"/>
    </source>
</evidence>
<evidence type="ECO:0000305" key="5"/>
<protein>
    <recommendedName>
        <fullName>Betaine aldehyde dehydrogenase, chloroplastic</fullName>
        <shortName>BADH</shortName>
        <ecNumber>1.2.1.8</ecNumber>
    </recommendedName>
</protein>
<dbReference type="EC" id="1.2.1.8"/>
<dbReference type="EMBL" id="AF000132">
    <property type="protein sequence ID" value="AAB58165.1"/>
    <property type="molecule type" value="Genomic_DNA"/>
</dbReference>
<dbReference type="SMR" id="O04895"/>
<dbReference type="UniPathway" id="UPA00529">
    <property type="reaction ID" value="UER00386"/>
</dbReference>
<dbReference type="GO" id="GO:0009507">
    <property type="term" value="C:chloroplast"/>
    <property type="evidence" value="ECO:0007669"/>
    <property type="project" value="UniProtKB-SubCell"/>
</dbReference>
<dbReference type="GO" id="GO:0019145">
    <property type="term" value="F:aminobutyraldehyde dehydrogenase (NAD+) activity"/>
    <property type="evidence" value="ECO:0007669"/>
    <property type="project" value="UniProtKB-ARBA"/>
</dbReference>
<dbReference type="GO" id="GO:0008802">
    <property type="term" value="F:betaine-aldehyde dehydrogenase (NAD+) activity"/>
    <property type="evidence" value="ECO:0007669"/>
    <property type="project" value="UniProtKB-EC"/>
</dbReference>
<dbReference type="GO" id="GO:0110095">
    <property type="term" value="P:cellular detoxification of aldehyde"/>
    <property type="evidence" value="ECO:0007669"/>
    <property type="project" value="UniProtKB-ARBA"/>
</dbReference>
<dbReference type="GO" id="GO:0019285">
    <property type="term" value="P:glycine betaine biosynthetic process from choline"/>
    <property type="evidence" value="ECO:0007669"/>
    <property type="project" value="UniProtKB-UniPathway"/>
</dbReference>
<dbReference type="CDD" id="cd07110">
    <property type="entry name" value="ALDH_F10_BADH"/>
    <property type="match status" value="1"/>
</dbReference>
<dbReference type="FunFam" id="3.40.309.10:FF:000012">
    <property type="entry name" value="Betaine aldehyde dehydrogenase"/>
    <property type="match status" value="1"/>
</dbReference>
<dbReference type="FunFam" id="3.40.605.10:FF:000007">
    <property type="entry name" value="NAD/NADP-dependent betaine aldehyde dehydrogenase"/>
    <property type="match status" value="1"/>
</dbReference>
<dbReference type="Gene3D" id="3.40.605.10">
    <property type="entry name" value="Aldehyde Dehydrogenase, Chain A, domain 1"/>
    <property type="match status" value="1"/>
</dbReference>
<dbReference type="Gene3D" id="3.40.309.10">
    <property type="entry name" value="Aldehyde Dehydrogenase, Chain A, domain 2"/>
    <property type="match status" value="1"/>
</dbReference>
<dbReference type="InterPro" id="IPR016161">
    <property type="entry name" value="Ald_DH/histidinol_DH"/>
</dbReference>
<dbReference type="InterPro" id="IPR016163">
    <property type="entry name" value="Ald_DH_C"/>
</dbReference>
<dbReference type="InterPro" id="IPR016160">
    <property type="entry name" value="Ald_DH_CS_CYS"/>
</dbReference>
<dbReference type="InterPro" id="IPR029510">
    <property type="entry name" value="Ald_DH_CS_GLU"/>
</dbReference>
<dbReference type="InterPro" id="IPR016162">
    <property type="entry name" value="Ald_DH_N"/>
</dbReference>
<dbReference type="InterPro" id="IPR015590">
    <property type="entry name" value="Aldehyde_DH_dom"/>
</dbReference>
<dbReference type="PANTHER" id="PTHR43860">
    <property type="entry name" value="BETAINE ALDEHYDE DEHYDROGENASE"/>
    <property type="match status" value="1"/>
</dbReference>
<dbReference type="PANTHER" id="PTHR43860:SF2">
    <property type="entry name" value="BETAINE ALDEHYDE DEHYDROGENASE-RELATED"/>
    <property type="match status" value="1"/>
</dbReference>
<dbReference type="Pfam" id="PF00171">
    <property type="entry name" value="Aldedh"/>
    <property type="match status" value="1"/>
</dbReference>
<dbReference type="SUPFAM" id="SSF53720">
    <property type="entry name" value="ALDH-like"/>
    <property type="match status" value="1"/>
</dbReference>
<dbReference type="PROSITE" id="PS00070">
    <property type="entry name" value="ALDEHYDE_DEHYDR_CYS"/>
    <property type="match status" value="1"/>
</dbReference>
<dbReference type="PROSITE" id="PS00687">
    <property type="entry name" value="ALDEHYDE_DEHYDR_GLU"/>
    <property type="match status" value="1"/>
</dbReference>
<sequence length="501" mass="54504">MAIRVPSRQLFIDGEWREPIKKNRIPIINPSTEEIIGDIPAATAEDVELAVAAARRALKRNKGEDWASASGAHRAKYLRAIAAKITEKKDYFAKLEAMDCGKPLDEAARDIDDVAGCFEYYADQAEALDAKQKAPIALPMDTFKCHVLKQPIGVVGLISPWNYPLLMATWKVAPALAAGCSAVLKPSELASVTCLELAEVCREVGLPPGVLNILTGLGPEAGGPLACHPDVDKVAFTGSTATGSKVMSSAAQLVKPVTLELGGKSPIVIFEDVDLDKAAEWTAFGCFWTNGQICSATSRLLVHESIAAEFLDRLVKWCKNIKISDPFEEGCRLGPVVSKSQYEKVLKFISTAKSEGATILCGGSRPEHLKKGYYVEPTIISDVSTSMQIWREEVFGPVLCQKTFGSEDEAIELANDTQYGLGAAVLSKDLDRCERITKALEVGAVWVNCSQPCFTQAPWGGTKRSGFGRELGEWGIENYLNIKQVTRDTSTDEPWGWYKSP</sequence>
<accession>O04895</accession>
<keyword id="KW-0150">Chloroplast</keyword>
<keyword id="KW-0520">NAD</keyword>
<keyword id="KW-0560">Oxidoreductase</keyword>
<keyword id="KW-0934">Plastid</keyword>
<keyword id="KW-0809">Transit peptide</keyword>
<comment type="catalytic activity">
    <reaction>
        <text>betaine aldehyde + NAD(+) + H2O = glycine betaine + NADH + 2 H(+)</text>
        <dbReference type="Rhea" id="RHEA:15305"/>
        <dbReference type="ChEBI" id="CHEBI:15377"/>
        <dbReference type="ChEBI" id="CHEBI:15378"/>
        <dbReference type="ChEBI" id="CHEBI:15710"/>
        <dbReference type="ChEBI" id="CHEBI:17750"/>
        <dbReference type="ChEBI" id="CHEBI:57540"/>
        <dbReference type="ChEBI" id="CHEBI:57945"/>
        <dbReference type="EC" id="1.2.1.8"/>
    </reaction>
</comment>
<comment type="pathway">
    <text>Amine and polyamine biosynthesis; betaine biosynthesis via choline pathway; betaine from betaine aldehyde: step 1/1.</text>
</comment>
<comment type="subunit">
    <text evidence="1">Homodimer.</text>
</comment>
<comment type="subcellular location">
    <subcellularLocation>
        <location>Plastid</location>
        <location>Chloroplast</location>
    </subcellularLocation>
</comment>
<comment type="similarity">
    <text evidence="5">Belongs to the aldehyde dehydrogenase family.</text>
</comment>
<organism>
    <name type="scientific">Amaranthus hypochondriacus</name>
    <name type="common">Prince-of-Wales feather</name>
    <name type="synonym">Amaranthus hybridus var. hypochondriacus</name>
    <dbReference type="NCBI Taxonomy" id="28502"/>
    <lineage>
        <taxon>Eukaryota</taxon>
        <taxon>Viridiplantae</taxon>
        <taxon>Streptophyta</taxon>
        <taxon>Embryophyta</taxon>
        <taxon>Tracheophyta</taxon>
        <taxon>Spermatophyta</taxon>
        <taxon>Magnoliopsida</taxon>
        <taxon>eudicotyledons</taxon>
        <taxon>Gunneridae</taxon>
        <taxon>Pentapetalae</taxon>
        <taxon>Caryophyllales</taxon>
        <taxon>Amaranthaceae</taxon>
        <taxon>Amaranthus</taxon>
    </lineage>
</organism>
<gene>
    <name type="primary">BADH4</name>
</gene>
<name>BADH_AMAHP</name>